<gene>
    <name evidence="1" type="primary">rpsJ</name>
    <name type="ordered locus">BHWA1_02123</name>
</gene>
<accession>C0QVZ5</accession>
<keyword id="KW-0687">Ribonucleoprotein</keyword>
<keyword id="KW-0689">Ribosomal protein</keyword>
<protein>
    <recommendedName>
        <fullName evidence="1">Small ribosomal subunit protein uS10</fullName>
    </recommendedName>
    <alternativeName>
        <fullName evidence="2">30S ribosomal protein S10</fullName>
    </alternativeName>
</protein>
<proteinExistence type="inferred from homology"/>
<comment type="function">
    <text evidence="1">Involved in the binding of tRNA to the ribosomes.</text>
</comment>
<comment type="subunit">
    <text evidence="1">Part of the 30S ribosomal subunit.</text>
</comment>
<comment type="similarity">
    <text evidence="1">Belongs to the universal ribosomal protein uS10 family.</text>
</comment>
<name>RS10_BRAHW</name>
<organism>
    <name type="scientific">Brachyspira hyodysenteriae (strain ATCC 49526 / WA1)</name>
    <dbReference type="NCBI Taxonomy" id="565034"/>
    <lineage>
        <taxon>Bacteria</taxon>
        <taxon>Pseudomonadati</taxon>
        <taxon>Spirochaetota</taxon>
        <taxon>Spirochaetia</taxon>
        <taxon>Brachyspirales</taxon>
        <taxon>Brachyspiraceae</taxon>
        <taxon>Brachyspira</taxon>
    </lineage>
</organism>
<dbReference type="EMBL" id="CP001357">
    <property type="protein sequence ID" value="ACN84581.1"/>
    <property type="molecule type" value="Genomic_DNA"/>
</dbReference>
<dbReference type="RefSeq" id="WP_008723370.1">
    <property type="nucleotide sequence ID" value="NC_012225.1"/>
</dbReference>
<dbReference type="SMR" id="C0QVZ5"/>
<dbReference type="STRING" id="565034.BHWA1_02123"/>
<dbReference type="GeneID" id="66487630"/>
<dbReference type="KEGG" id="bhy:BHWA1_02123"/>
<dbReference type="eggNOG" id="COG0051">
    <property type="taxonomic scope" value="Bacteria"/>
</dbReference>
<dbReference type="HOGENOM" id="CLU_122625_1_3_12"/>
<dbReference type="Proteomes" id="UP000001803">
    <property type="component" value="Chromosome"/>
</dbReference>
<dbReference type="GO" id="GO:1990904">
    <property type="term" value="C:ribonucleoprotein complex"/>
    <property type="evidence" value="ECO:0007669"/>
    <property type="project" value="UniProtKB-KW"/>
</dbReference>
<dbReference type="GO" id="GO:0005840">
    <property type="term" value="C:ribosome"/>
    <property type="evidence" value="ECO:0007669"/>
    <property type="project" value="UniProtKB-KW"/>
</dbReference>
<dbReference type="GO" id="GO:0003735">
    <property type="term" value="F:structural constituent of ribosome"/>
    <property type="evidence" value="ECO:0007669"/>
    <property type="project" value="InterPro"/>
</dbReference>
<dbReference type="GO" id="GO:0000049">
    <property type="term" value="F:tRNA binding"/>
    <property type="evidence" value="ECO:0007669"/>
    <property type="project" value="UniProtKB-UniRule"/>
</dbReference>
<dbReference type="GO" id="GO:0006412">
    <property type="term" value="P:translation"/>
    <property type="evidence" value="ECO:0007669"/>
    <property type="project" value="UniProtKB-UniRule"/>
</dbReference>
<dbReference type="FunFam" id="3.30.70.600:FF:000003">
    <property type="entry name" value="30S ribosomal protein S10"/>
    <property type="match status" value="1"/>
</dbReference>
<dbReference type="Gene3D" id="3.30.70.600">
    <property type="entry name" value="Ribosomal protein S10 domain"/>
    <property type="match status" value="1"/>
</dbReference>
<dbReference type="HAMAP" id="MF_00508">
    <property type="entry name" value="Ribosomal_uS10"/>
    <property type="match status" value="1"/>
</dbReference>
<dbReference type="InterPro" id="IPR001848">
    <property type="entry name" value="Ribosomal_uS10"/>
</dbReference>
<dbReference type="InterPro" id="IPR018268">
    <property type="entry name" value="Ribosomal_uS10_CS"/>
</dbReference>
<dbReference type="InterPro" id="IPR027486">
    <property type="entry name" value="Ribosomal_uS10_dom"/>
</dbReference>
<dbReference type="InterPro" id="IPR036838">
    <property type="entry name" value="Ribosomal_uS10_dom_sf"/>
</dbReference>
<dbReference type="NCBIfam" id="NF001861">
    <property type="entry name" value="PRK00596.1"/>
    <property type="match status" value="1"/>
</dbReference>
<dbReference type="NCBIfam" id="TIGR01049">
    <property type="entry name" value="rpsJ_bact"/>
    <property type="match status" value="1"/>
</dbReference>
<dbReference type="PANTHER" id="PTHR11700">
    <property type="entry name" value="30S RIBOSOMAL PROTEIN S10 FAMILY MEMBER"/>
    <property type="match status" value="1"/>
</dbReference>
<dbReference type="Pfam" id="PF00338">
    <property type="entry name" value="Ribosomal_S10"/>
    <property type="match status" value="1"/>
</dbReference>
<dbReference type="PRINTS" id="PR00971">
    <property type="entry name" value="RIBOSOMALS10"/>
</dbReference>
<dbReference type="SMART" id="SM01403">
    <property type="entry name" value="Ribosomal_S10"/>
    <property type="match status" value="1"/>
</dbReference>
<dbReference type="SUPFAM" id="SSF54999">
    <property type="entry name" value="Ribosomal protein S10"/>
    <property type="match status" value="1"/>
</dbReference>
<dbReference type="PROSITE" id="PS00361">
    <property type="entry name" value="RIBOSOMAL_S10"/>
    <property type="match status" value="1"/>
</dbReference>
<sequence>MKEQKIRVKLKAFDIELIDQSAQSIVASVKKTGARVSGPIPLPTSIRKVTVIRSPHVNIKSREQFEMRIYKRLIDIFDVTPQTTESLKKLALPAGVDVQLK</sequence>
<evidence type="ECO:0000255" key="1">
    <source>
        <dbReference type="HAMAP-Rule" id="MF_00508"/>
    </source>
</evidence>
<evidence type="ECO:0000305" key="2"/>
<reference key="1">
    <citation type="journal article" date="2009" name="PLoS ONE">
        <title>Genome sequence of the pathogenic intestinal spirochete Brachyspira hyodysenteriae reveals adaptations to its lifestyle in the porcine large intestine.</title>
        <authorList>
            <person name="Bellgard M.I."/>
            <person name="Wanchanthuek P."/>
            <person name="La T."/>
            <person name="Ryan K."/>
            <person name="Moolhuijzen P."/>
            <person name="Albertyn Z."/>
            <person name="Shaban B."/>
            <person name="Motro Y."/>
            <person name="Dunn D.S."/>
            <person name="Schibeci D."/>
            <person name="Hunter A."/>
            <person name="Barrero R."/>
            <person name="Phillips N.D."/>
            <person name="Hampson D.J."/>
        </authorList>
    </citation>
    <scope>NUCLEOTIDE SEQUENCE [LARGE SCALE GENOMIC DNA]</scope>
    <source>
        <strain>ATCC 49526 / WA1</strain>
    </source>
</reference>
<feature type="chain" id="PRO_1000196290" description="Small ribosomal subunit protein uS10">
    <location>
        <begin position="1"/>
        <end position="101"/>
    </location>
</feature>